<sequence length="562" mass="63879">MSDKQQVAAALAQALPEMDVKEIEAKIERPKDSSNGDYAFPTFFLAKTLHKAPQMIASELVEKVDQNGFEKVVVAGPYINFFLDKAQVGAKILQTILADPEHYGEIDLGHQSNVTIDYSSPNIAKPMGMGHLRSTMIGEAVARILEKVNYNLIRIDYLGDWGTQFGKLMAAYEMWGDEAEVKKDPINTLLKYYVRINNEADEHPEYTEAGRNWFAKLEHGDEEAWRLWHWFREVSLERFQRVYKMLDVNFDSFNGEAFSAQKMEEPIQLLRDKDLLKPSRGAEIVDLDEYNLPPLLIIKSNGTTTYITRDLATALFRKRMYGHAKSLYVVGAEQETYFKQLRAALKEMGFNWWDQIEHISFGLMNLNGKKMSTRKGNVVSLEDVLNDSIDLARKQIAEKNPDLENADEVAKEVGVGAVIFHDLKNYRRNAVNFKLEDVVKFEGETGPYVQYARARAESILRKGGIRDFSDVDLTKAGAEAWELISFLGQYSEAIKRAALNYDPSVIAKYALELAKKFNQYYAHTRILDKDEAQPARLALTQAVSDVLKSALDLLDIKAPDEM</sequence>
<comment type="catalytic activity">
    <reaction evidence="1">
        <text>tRNA(Arg) + L-arginine + ATP = L-arginyl-tRNA(Arg) + AMP + diphosphate</text>
        <dbReference type="Rhea" id="RHEA:20301"/>
        <dbReference type="Rhea" id="RHEA-COMP:9658"/>
        <dbReference type="Rhea" id="RHEA-COMP:9673"/>
        <dbReference type="ChEBI" id="CHEBI:30616"/>
        <dbReference type="ChEBI" id="CHEBI:32682"/>
        <dbReference type="ChEBI" id="CHEBI:33019"/>
        <dbReference type="ChEBI" id="CHEBI:78442"/>
        <dbReference type="ChEBI" id="CHEBI:78513"/>
        <dbReference type="ChEBI" id="CHEBI:456215"/>
        <dbReference type="EC" id="6.1.1.19"/>
    </reaction>
</comment>
<comment type="subunit">
    <text evidence="1">Monomer.</text>
</comment>
<comment type="subcellular location">
    <subcellularLocation>
        <location evidence="1">Cytoplasm</location>
    </subcellularLocation>
</comment>
<comment type="similarity">
    <text evidence="1">Belongs to the class-I aminoacyl-tRNA synthetase family.</text>
</comment>
<accession>A5VL03</accession>
<protein>
    <recommendedName>
        <fullName evidence="1">Arginine--tRNA ligase</fullName>
        <ecNumber evidence="1">6.1.1.19</ecNumber>
    </recommendedName>
    <alternativeName>
        <fullName evidence="1">Arginyl-tRNA synthetase</fullName>
        <shortName evidence="1">ArgRS</shortName>
    </alternativeName>
</protein>
<feature type="chain" id="PRO_1000057811" description="Arginine--tRNA ligase">
    <location>
        <begin position="1"/>
        <end position="562"/>
    </location>
</feature>
<feature type="short sequence motif" description="'HIGH' region">
    <location>
        <begin position="121"/>
        <end position="131"/>
    </location>
</feature>
<reference key="1">
    <citation type="journal article" date="2011" name="PLoS Genet.">
        <title>The evolution of host specialization in the vertebrate gut symbiont Lactobacillus reuteri.</title>
        <authorList>
            <person name="Frese S.A."/>
            <person name="Benson A.K."/>
            <person name="Tannock G.W."/>
            <person name="Loach D.M."/>
            <person name="Kim J."/>
            <person name="Zhang M."/>
            <person name="Oh P.L."/>
            <person name="Heng N.C."/>
            <person name="Patil P.B."/>
            <person name="Juge N."/>
            <person name="Mackenzie D.A."/>
            <person name="Pearson B.M."/>
            <person name="Lapidus A."/>
            <person name="Dalin E."/>
            <person name="Tice H."/>
            <person name="Goltsman E."/>
            <person name="Land M."/>
            <person name="Hauser L."/>
            <person name="Ivanova N."/>
            <person name="Kyrpides N.C."/>
            <person name="Walter J."/>
        </authorList>
    </citation>
    <scope>NUCLEOTIDE SEQUENCE [LARGE SCALE GENOMIC DNA]</scope>
    <source>
        <strain>DSM 20016</strain>
    </source>
</reference>
<gene>
    <name evidence="1" type="primary">argS</name>
    <name type="ordered locus">Lreu_1270</name>
</gene>
<dbReference type="EC" id="6.1.1.19" evidence="1"/>
<dbReference type="EMBL" id="CP000705">
    <property type="protein sequence ID" value="ABQ83527.1"/>
    <property type="molecule type" value="Genomic_DNA"/>
</dbReference>
<dbReference type="RefSeq" id="WP_003668521.1">
    <property type="nucleotide sequence ID" value="NZ_AZDD01000018.1"/>
</dbReference>
<dbReference type="SMR" id="A5VL03"/>
<dbReference type="STRING" id="557436.Lreu_1270"/>
<dbReference type="GeneID" id="77191938"/>
<dbReference type="KEGG" id="lre:Lreu_1270"/>
<dbReference type="PATRIC" id="fig|557436.17.peg.593"/>
<dbReference type="eggNOG" id="COG0018">
    <property type="taxonomic scope" value="Bacteria"/>
</dbReference>
<dbReference type="HOGENOM" id="CLU_006406_6_1_9"/>
<dbReference type="Proteomes" id="UP000001991">
    <property type="component" value="Chromosome"/>
</dbReference>
<dbReference type="GO" id="GO:0005737">
    <property type="term" value="C:cytoplasm"/>
    <property type="evidence" value="ECO:0007669"/>
    <property type="project" value="UniProtKB-SubCell"/>
</dbReference>
<dbReference type="GO" id="GO:0004814">
    <property type="term" value="F:arginine-tRNA ligase activity"/>
    <property type="evidence" value="ECO:0007669"/>
    <property type="project" value="UniProtKB-UniRule"/>
</dbReference>
<dbReference type="GO" id="GO:0005524">
    <property type="term" value="F:ATP binding"/>
    <property type="evidence" value="ECO:0007669"/>
    <property type="project" value="UniProtKB-UniRule"/>
</dbReference>
<dbReference type="GO" id="GO:0006420">
    <property type="term" value="P:arginyl-tRNA aminoacylation"/>
    <property type="evidence" value="ECO:0007669"/>
    <property type="project" value="UniProtKB-UniRule"/>
</dbReference>
<dbReference type="CDD" id="cd07956">
    <property type="entry name" value="Anticodon_Ia_Arg"/>
    <property type="match status" value="1"/>
</dbReference>
<dbReference type="CDD" id="cd00671">
    <property type="entry name" value="ArgRS_core"/>
    <property type="match status" value="1"/>
</dbReference>
<dbReference type="FunFam" id="3.40.50.620:FF:000116">
    <property type="entry name" value="Arginine--tRNA ligase"/>
    <property type="match status" value="1"/>
</dbReference>
<dbReference type="Gene3D" id="3.30.1360.70">
    <property type="entry name" value="Arginyl tRNA synthetase N-terminal domain"/>
    <property type="match status" value="1"/>
</dbReference>
<dbReference type="Gene3D" id="3.40.50.620">
    <property type="entry name" value="HUPs"/>
    <property type="match status" value="1"/>
</dbReference>
<dbReference type="Gene3D" id="1.10.730.10">
    <property type="entry name" value="Isoleucyl-tRNA Synthetase, Domain 1"/>
    <property type="match status" value="1"/>
</dbReference>
<dbReference type="HAMAP" id="MF_00123">
    <property type="entry name" value="Arg_tRNA_synth"/>
    <property type="match status" value="1"/>
</dbReference>
<dbReference type="InterPro" id="IPR001278">
    <property type="entry name" value="Arg-tRNA-ligase"/>
</dbReference>
<dbReference type="InterPro" id="IPR005148">
    <property type="entry name" value="Arg-tRNA-synth_N"/>
</dbReference>
<dbReference type="InterPro" id="IPR036695">
    <property type="entry name" value="Arg-tRNA-synth_N_sf"/>
</dbReference>
<dbReference type="InterPro" id="IPR035684">
    <property type="entry name" value="ArgRS_core"/>
</dbReference>
<dbReference type="InterPro" id="IPR008909">
    <property type="entry name" value="DALR_anticod-bd"/>
</dbReference>
<dbReference type="InterPro" id="IPR014729">
    <property type="entry name" value="Rossmann-like_a/b/a_fold"/>
</dbReference>
<dbReference type="InterPro" id="IPR009080">
    <property type="entry name" value="tRNAsynth_Ia_anticodon-bd"/>
</dbReference>
<dbReference type="NCBIfam" id="TIGR00456">
    <property type="entry name" value="argS"/>
    <property type="match status" value="1"/>
</dbReference>
<dbReference type="PANTHER" id="PTHR11956:SF5">
    <property type="entry name" value="ARGININE--TRNA LIGASE, CYTOPLASMIC"/>
    <property type="match status" value="1"/>
</dbReference>
<dbReference type="PANTHER" id="PTHR11956">
    <property type="entry name" value="ARGINYL-TRNA SYNTHETASE"/>
    <property type="match status" value="1"/>
</dbReference>
<dbReference type="Pfam" id="PF03485">
    <property type="entry name" value="Arg_tRNA_synt_N"/>
    <property type="match status" value="1"/>
</dbReference>
<dbReference type="Pfam" id="PF05746">
    <property type="entry name" value="DALR_1"/>
    <property type="match status" value="1"/>
</dbReference>
<dbReference type="Pfam" id="PF00750">
    <property type="entry name" value="tRNA-synt_1d"/>
    <property type="match status" value="1"/>
</dbReference>
<dbReference type="PRINTS" id="PR01038">
    <property type="entry name" value="TRNASYNTHARG"/>
</dbReference>
<dbReference type="SMART" id="SM01016">
    <property type="entry name" value="Arg_tRNA_synt_N"/>
    <property type="match status" value="1"/>
</dbReference>
<dbReference type="SMART" id="SM00836">
    <property type="entry name" value="DALR_1"/>
    <property type="match status" value="1"/>
</dbReference>
<dbReference type="SUPFAM" id="SSF47323">
    <property type="entry name" value="Anticodon-binding domain of a subclass of class I aminoacyl-tRNA synthetases"/>
    <property type="match status" value="1"/>
</dbReference>
<dbReference type="SUPFAM" id="SSF55190">
    <property type="entry name" value="Arginyl-tRNA synthetase (ArgRS), N-terminal 'additional' domain"/>
    <property type="match status" value="1"/>
</dbReference>
<dbReference type="SUPFAM" id="SSF52374">
    <property type="entry name" value="Nucleotidylyl transferase"/>
    <property type="match status" value="1"/>
</dbReference>
<keyword id="KW-0030">Aminoacyl-tRNA synthetase</keyword>
<keyword id="KW-0067">ATP-binding</keyword>
<keyword id="KW-0963">Cytoplasm</keyword>
<keyword id="KW-0436">Ligase</keyword>
<keyword id="KW-0547">Nucleotide-binding</keyword>
<keyword id="KW-0648">Protein biosynthesis</keyword>
<keyword id="KW-1185">Reference proteome</keyword>
<organism>
    <name type="scientific">Limosilactobacillus reuteri (strain DSM 20016)</name>
    <name type="common">Lactobacillus reuteri</name>
    <dbReference type="NCBI Taxonomy" id="557436"/>
    <lineage>
        <taxon>Bacteria</taxon>
        <taxon>Bacillati</taxon>
        <taxon>Bacillota</taxon>
        <taxon>Bacilli</taxon>
        <taxon>Lactobacillales</taxon>
        <taxon>Lactobacillaceae</taxon>
        <taxon>Limosilactobacillus</taxon>
    </lineage>
</organism>
<name>SYR_LIMRD</name>
<proteinExistence type="inferred from homology"/>
<evidence type="ECO:0000255" key="1">
    <source>
        <dbReference type="HAMAP-Rule" id="MF_00123"/>
    </source>
</evidence>